<dbReference type="EC" id="4.1.1.65" evidence="1"/>
<dbReference type="EMBL" id="AM236080">
    <property type="protein sequence ID" value="CAK07028.1"/>
    <property type="molecule type" value="Genomic_DNA"/>
</dbReference>
<dbReference type="RefSeq" id="WP_011651223.1">
    <property type="nucleotide sequence ID" value="NC_008380.1"/>
</dbReference>
<dbReference type="SMR" id="Q1MJ32"/>
<dbReference type="EnsemblBacteria" id="CAK07028">
    <property type="protein sequence ID" value="CAK07028"/>
    <property type="gene ID" value="RL1533"/>
</dbReference>
<dbReference type="KEGG" id="rle:RL1533"/>
<dbReference type="eggNOG" id="COG0688">
    <property type="taxonomic scope" value="Bacteria"/>
</dbReference>
<dbReference type="HOGENOM" id="CLU_072492_0_0_5"/>
<dbReference type="UniPathway" id="UPA00558">
    <property type="reaction ID" value="UER00616"/>
</dbReference>
<dbReference type="Proteomes" id="UP000006575">
    <property type="component" value="Chromosome"/>
</dbReference>
<dbReference type="GO" id="GO:0005886">
    <property type="term" value="C:plasma membrane"/>
    <property type="evidence" value="ECO:0007669"/>
    <property type="project" value="UniProtKB-SubCell"/>
</dbReference>
<dbReference type="GO" id="GO:0004609">
    <property type="term" value="F:phosphatidylserine decarboxylase activity"/>
    <property type="evidence" value="ECO:0007669"/>
    <property type="project" value="UniProtKB-UniRule"/>
</dbReference>
<dbReference type="GO" id="GO:0006646">
    <property type="term" value="P:phosphatidylethanolamine biosynthetic process"/>
    <property type="evidence" value="ECO:0007669"/>
    <property type="project" value="UniProtKB-UniRule"/>
</dbReference>
<dbReference type="HAMAP" id="MF_00664">
    <property type="entry name" value="PS_decarb_PSD_A"/>
    <property type="match status" value="1"/>
</dbReference>
<dbReference type="InterPro" id="IPR003817">
    <property type="entry name" value="PS_Dcarbxylase"/>
</dbReference>
<dbReference type="InterPro" id="IPR033175">
    <property type="entry name" value="PSD-A"/>
</dbReference>
<dbReference type="NCBIfam" id="NF003677">
    <property type="entry name" value="PRK05305.1-1"/>
    <property type="match status" value="1"/>
</dbReference>
<dbReference type="NCBIfam" id="NF003678">
    <property type="entry name" value="PRK05305.1-2"/>
    <property type="match status" value="1"/>
</dbReference>
<dbReference type="NCBIfam" id="NF003679">
    <property type="entry name" value="PRK05305.1-3"/>
    <property type="match status" value="1"/>
</dbReference>
<dbReference type="NCBIfam" id="NF003685">
    <property type="entry name" value="PRK05305.2-5"/>
    <property type="match status" value="1"/>
</dbReference>
<dbReference type="PANTHER" id="PTHR35809">
    <property type="entry name" value="ARCHAETIDYLSERINE DECARBOXYLASE PROENZYME-RELATED"/>
    <property type="match status" value="1"/>
</dbReference>
<dbReference type="PANTHER" id="PTHR35809:SF1">
    <property type="entry name" value="ARCHAETIDYLSERINE DECARBOXYLASE PROENZYME-RELATED"/>
    <property type="match status" value="1"/>
</dbReference>
<dbReference type="Pfam" id="PF02666">
    <property type="entry name" value="PS_Dcarbxylase"/>
    <property type="match status" value="1"/>
</dbReference>
<reference key="1">
    <citation type="journal article" date="2006" name="Genome Biol.">
        <title>The genome of Rhizobium leguminosarum has recognizable core and accessory components.</title>
        <authorList>
            <person name="Young J.P.W."/>
            <person name="Crossman L.C."/>
            <person name="Johnston A.W.B."/>
            <person name="Thomson N.R."/>
            <person name="Ghazoui Z.F."/>
            <person name="Hull K.H."/>
            <person name="Wexler M."/>
            <person name="Curson A.R.J."/>
            <person name="Todd J.D."/>
            <person name="Poole P.S."/>
            <person name="Mauchline T.H."/>
            <person name="East A.K."/>
            <person name="Quail M.A."/>
            <person name="Churcher C."/>
            <person name="Arrowsmith C."/>
            <person name="Cherevach I."/>
            <person name="Chillingworth T."/>
            <person name="Clarke K."/>
            <person name="Cronin A."/>
            <person name="Davis P."/>
            <person name="Fraser A."/>
            <person name="Hance Z."/>
            <person name="Hauser H."/>
            <person name="Jagels K."/>
            <person name="Moule S."/>
            <person name="Mungall K."/>
            <person name="Norbertczak H."/>
            <person name="Rabbinowitsch E."/>
            <person name="Sanders M."/>
            <person name="Simmonds M."/>
            <person name="Whitehead S."/>
            <person name="Parkhill J."/>
        </authorList>
    </citation>
    <scope>NUCLEOTIDE SEQUENCE [LARGE SCALE GENOMIC DNA]</scope>
    <source>
        <strain>DSM 114642 / LMG 32736 / 3841</strain>
    </source>
</reference>
<proteinExistence type="inferred from homology"/>
<accession>Q1MJ32</accession>
<organism>
    <name type="scientific">Rhizobium johnstonii (strain DSM 114642 / LMG 32736 / 3841)</name>
    <name type="common">Rhizobium leguminosarum bv. viciae</name>
    <dbReference type="NCBI Taxonomy" id="216596"/>
    <lineage>
        <taxon>Bacteria</taxon>
        <taxon>Pseudomonadati</taxon>
        <taxon>Pseudomonadota</taxon>
        <taxon>Alphaproteobacteria</taxon>
        <taxon>Hyphomicrobiales</taxon>
        <taxon>Rhizobiaceae</taxon>
        <taxon>Rhizobium/Agrobacterium group</taxon>
        <taxon>Rhizobium</taxon>
        <taxon>Rhizobium johnstonii</taxon>
    </lineage>
</organism>
<name>PSD_RHIJ3</name>
<feature type="chain" id="PRO_0000262251" description="Phosphatidylserine decarboxylase beta chain" evidence="1">
    <location>
        <begin position="1"/>
        <end position="189"/>
    </location>
</feature>
<feature type="chain" id="PRO_0000262252" description="Phosphatidylserine decarboxylase alpha chain" evidence="1">
    <location>
        <begin position="190"/>
        <end position="232"/>
    </location>
</feature>
<feature type="active site" description="Schiff-base intermediate with substrate; via pyruvic acid" evidence="1">
    <location>
        <position position="190"/>
    </location>
</feature>
<feature type="site" description="Cleavage (non-hydrolytic); by autocatalysis" evidence="1">
    <location>
        <begin position="189"/>
        <end position="190"/>
    </location>
</feature>
<feature type="modified residue" description="Pyruvic acid (Ser); by autocatalysis" evidence="1">
    <location>
        <position position="190"/>
    </location>
</feature>
<comment type="function">
    <text evidence="1">Catalyzes the formation of phosphatidylethanolamine (PtdEtn) from phosphatidylserine (PtdSer).</text>
</comment>
<comment type="catalytic activity">
    <reaction evidence="1">
        <text>a 1,2-diacyl-sn-glycero-3-phospho-L-serine + H(+) = a 1,2-diacyl-sn-glycero-3-phosphoethanolamine + CO2</text>
        <dbReference type="Rhea" id="RHEA:20828"/>
        <dbReference type="ChEBI" id="CHEBI:15378"/>
        <dbReference type="ChEBI" id="CHEBI:16526"/>
        <dbReference type="ChEBI" id="CHEBI:57262"/>
        <dbReference type="ChEBI" id="CHEBI:64612"/>
        <dbReference type="EC" id="4.1.1.65"/>
    </reaction>
</comment>
<comment type="cofactor">
    <cofactor evidence="1">
        <name>pyruvate</name>
        <dbReference type="ChEBI" id="CHEBI:15361"/>
    </cofactor>
    <text evidence="1">Binds 1 pyruvoyl group covalently per subunit.</text>
</comment>
<comment type="pathway">
    <text evidence="1">Phospholipid metabolism; phosphatidylethanolamine biosynthesis; phosphatidylethanolamine from CDP-diacylglycerol: step 2/2.</text>
</comment>
<comment type="subunit">
    <text evidence="1">Heterodimer of a large membrane-associated beta subunit and a small pyruvoyl-containing alpha subunit.</text>
</comment>
<comment type="subcellular location">
    <subcellularLocation>
        <location evidence="1">Cell membrane</location>
        <topology evidence="1">Peripheral membrane protein</topology>
    </subcellularLocation>
</comment>
<comment type="PTM">
    <text evidence="1">Is synthesized initially as an inactive proenzyme. Formation of the active enzyme involves a self-maturation process in which the active site pyruvoyl group is generated from an internal serine residue via an autocatalytic post-translational modification. Two non-identical subunits are generated from the proenzyme in this reaction, and the pyruvate is formed at the N-terminus of the alpha chain, which is derived from the carboxyl end of the proenzyme. The post-translation cleavage follows an unusual pathway, termed non-hydrolytic serinolysis, in which the side chain hydroxyl group of the serine supplies its oxygen atom to form the C-terminus of the beta chain, while the remainder of the serine residue undergoes an oxidative deamination to produce ammonia and the pyruvoyl prosthetic group on the alpha chain.</text>
</comment>
<comment type="similarity">
    <text evidence="1">Belongs to the phosphatidylserine decarboxylase family. PSD-A subfamily.</text>
</comment>
<gene>
    <name evidence="1" type="primary">psd</name>
    <name type="ordered locus">RL1533</name>
</gene>
<sequence>MSLFNTVRNTIVPVHKEGYPFVAAFFVASLVLGWIFKPLFWIGMIFTLWCAYFFRDPERVTPQDDDLVISPADGKVSAIQMVTPPAELNLGSEPMLRISVFMNVFNCHVNRAPMHGRIVSINYRSGSFVNAELDKASEDNERNGLVIETGHGQIGVVQIAGLVARRILCWANPNEPVDAGERFGLIRFGSRLDVFLPAGAAPRVSLGQTAVAGETVIAEFASAKGPVISRRS</sequence>
<keyword id="KW-1003">Cell membrane</keyword>
<keyword id="KW-0210">Decarboxylase</keyword>
<keyword id="KW-0444">Lipid biosynthesis</keyword>
<keyword id="KW-0443">Lipid metabolism</keyword>
<keyword id="KW-0456">Lyase</keyword>
<keyword id="KW-0472">Membrane</keyword>
<keyword id="KW-0594">Phospholipid biosynthesis</keyword>
<keyword id="KW-1208">Phospholipid metabolism</keyword>
<keyword id="KW-0670">Pyruvate</keyword>
<keyword id="KW-0865">Zymogen</keyword>
<protein>
    <recommendedName>
        <fullName evidence="1">Phosphatidylserine decarboxylase proenzyme</fullName>
        <ecNumber evidence="1">4.1.1.65</ecNumber>
    </recommendedName>
    <component>
        <recommendedName>
            <fullName evidence="1">Phosphatidylserine decarboxylase alpha chain</fullName>
        </recommendedName>
    </component>
    <component>
        <recommendedName>
            <fullName evidence="1">Phosphatidylserine decarboxylase beta chain</fullName>
        </recommendedName>
    </component>
</protein>
<evidence type="ECO:0000255" key="1">
    <source>
        <dbReference type="HAMAP-Rule" id="MF_00664"/>
    </source>
</evidence>